<organism>
    <name type="scientific">Dechloromonas aromatica (strain RCB)</name>
    <dbReference type="NCBI Taxonomy" id="159087"/>
    <lineage>
        <taxon>Bacteria</taxon>
        <taxon>Pseudomonadati</taxon>
        <taxon>Pseudomonadota</taxon>
        <taxon>Betaproteobacteria</taxon>
        <taxon>Rhodocyclales</taxon>
        <taxon>Azonexaceae</taxon>
        <taxon>Dechloromonas</taxon>
    </lineage>
</organism>
<comment type="cofactor">
    <cofactor evidence="1">
        <name>[4Fe-4S] cluster</name>
        <dbReference type="ChEBI" id="CHEBI:49883"/>
    </cofactor>
    <text evidence="1">Binds 1 [4Fe-4S] cluster. The cluster is coordinated with 3 cysteines and an exchangeable S-adenosyl-L-methionine.</text>
</comment>
<comment type="subcellular location">
    <subcellularLocation>
        <location evidence="4">Cytoplasm</location>
    </subcellularLocation>
</comment>
<comment type="similarity">
    <text evidence="4">Belongs to the radical SAM superfamily. RlmN family.</text>
</comment>
<evidence type="ECO:0000250" key="1"/>
<evidence type="ECO:0000255" key="2"/>
<evidence type="ECO:0000255" key="3">
    <source>
        <dbReference type="PROSITE-ProRule" id="PRU01266"/>
    </source>
</evidence>
<evidence type="ECO:0000305" key="4"/>
<dbReference type="EC" id="2.1.1.-"/>
<dbReference type="EMBL" id="CP000089">
    <property type="protein sequence ID" value="AAZ45913.1"/>
    <property type="molecule type" value="Genomic_DNA"/>
</dbReference>
<dbReference type="SMR" id="Q47GW8"/>
<dbReference type="STRING" id="159087.Daro_1157"/>
<dbReference type="KEGG" id="dar:Daro_1157"/>
<dbReference type="eggNOG" id="COG0820">
    <property type="taxonomic scope" value="Bacteria"/>
</dbReference>
<dbReference type="HOGENOM" id="CLU_029101_3_3_4"/>
<dbReference type="OrthoDB" id="9793973at2"/>
<dbReference type="GO" id="GO:0005737">
    <property type="term" value="C:cytoplasm"/>
    <property type="evidence" value="ECO:0007669"/>
    <property type="project" value="UniProtKB-SubCell"/>
</dbReference>
<dbReference type="GO" id="GO:0051539">
    <property type="term" value="F:4 iron, 4 sulfur cluster binding"/>
    <property type="evidence" value="ECO:0007669"/>
    <property type="project" value="UniProtKB-KW"/>
</dbReference>
<dbReference type="GO" id="GO:0046872">
    <property type="term" value="F:metal ion binding"/>
    <property type="evidence" value="ECO:0007669"/>
    <property type="project" value="UniProtKB-KW"/>
</dbReference>
<dbReference type="GO" id="GO:0008173">
    <property type="term" value="F:RNA methyltransferase activity"/>
    <property type="evidence" value="ECO:0007669"/>
    <property type="project" value="InterPro"/>
</dbReference>
<dbReference type="GO" id="GO:0070475">
    <property type="term" value="P:rRNA base methylation"/>
    <property type="evidence" value="ECO:0007669"/>
    <property type="project" value="TreeGrafter"/>
</dbReference>
<dbReference type="GO" id="GO:0030488">
    <property type="term" value="P:tRNA methylation"/>
    <property type="evidence" value="ECO:0007669"/>
    <property type="project" value="TreeGrafter"/>
</dbReference>
<dbReference type="Gene3D" id="3.20.20.70">
    <property type="entry name" value="Aldolase class I"/>
    <property type="match status" value="1"/>
</dbReference>
<dbReference type="InterPro" id="IPR013785">
    <property type="entry name" value="Aldolase_TIM"/>
</dbReference>
<dbReference type="InterPro" id="IPR040072">
    <property type="entry name" value="Methyltransferase_A"/>
</dbReference>
<dbReference type="InterPro" id="IPR004383">
    <property type="entry name" value="rRNA_lsu_MTrfase_RlmN/Cfr"/>
</dbReference>
<dbReference type="InterPro" id="IPR007197">
    <property type="entry name" value="rSAM"/>
</dbReference>
<dbReference type="NCBIfam" id="NF011034">
    <property type="entry name" value="PRK14464.1"/>
    <property type="match status" value="1"/>
</dbReference>
<dbReference type="PANTHER" id="PTHR30544">
    <property type="entry name" value="23S RRNA METHYLTRANSFERASE"/>
    <property type="match status" value="1"/>
</dbReference>
<dbReference type="PANTHER" id="PTHR30544:SF5">
    <property type="entry name" value="RADICAL SAM CORE DOMAIN-CONTAINING PROTEIN"/>
    <property type="match status" value="1"/>
</dbReference>
<dbReference type="Pfam" id="PF04055">
    <property type="entry name" value="Radical_SAM"/>
    <property type="match status" value="1"/>
</dbReference>
<dbReference type="PIRSF" id="PIRSF006004">
    <property type="entry name" value="CHP00048"/>
    <property type="match status" value="1"/>
</dbReference>
<dbReference type="SFLD" id="SFLDF00275">
    <property type="entry name" value="adenosine_C2_methyltransferase"/>
    <property type="match status" value="1"/>
</dbReference>
<dbReference type="SFLD" id="SFLDS00029">
    <property type="entry name" value="Radical_SAM"/>
    <property type="match status" value="1"/>
</dbReference>
<dbReference type="SUPFAM" id="SSF102114">
    <property type="entry name" value="Radical SAM enzymes"/>
    <property type="match status" value="1"/>
</dbReference>
<dbReference type="PROSITE" id="PS51918">
    <property type="entry name" value="RADICAL_SAM"/>
    <property type="match status" value="1"/>
</dbReference>
<reference key="1">
    <citation type="journal article" date="2009" name="BMC Genomics">
        <title>Metabolic analysis of the soil microbe Dechloromonas aromatica str. RCB: indications of a surprisingly complex life-style and cryptic anaerobic pathways for aromatic degradation.</title>
        <authorList>
            <person name="Salinero K.K."/>
            <person name="Keller K."/>
            <person name="Feil W.S."/>
            <person name="Feil H."/>
            <person name="Trong S."/>
            <person name="Di Bartolo G."/>
            <person name="Lapidus A."/>
        </authorList>
    </citation>
    <scope>NUCLEOTIDE SEQUENCE [LARGE SCALE GENOMIC DNA]</scope>
    <source>
        <strain>RCB</strain>
    </source>
</reference>
<accession>Q47GW8</accession>
<protein>
    <recommendedName>
        <fullName>Probable RNA methyltransferase Daro_1157</fullName>
        <ecNumber>2.1.1.-</ecNumber>
    </recommendedName>
</protein>
<proteinExistence type="inferred from homology"/>
<keyword id="KW-0004">4Fe-4S</keyword>
<keyword id="KW-0963">Cytoplasm</keyword>
<keyword id="KW-1015">Disulfide bond</keyword>
<keyword id="KW-0408">Iron</keyword>
<keyword id="KW-0411">Iron-sulfur</keyword>
<keyword id="KW-0479">Metal-binding</keyword>
<keyword id="KW-0489">Methyltransferase</keyword>
<keyword id="KW-0949">S-adenosyl-L-methionine</keyword>
<keyword id="KW-0808">Transferase</keyword>
<gene>
    <name type="ordered locus">Daro_1157</name>
</gene>
<feature type="chain" id="PRO_0000350144" description="Probable RNA methyltransferase Daro_1157">
    <location>
        <begin position="1"/>
        <end position="357"/>
    </location>
</feature>
<feature type="domain" description="Radical SAM core" evidence="3">
    <location>
        <begin position="94"/>
        <end position="320"/>
    </location>
</feature>
<feature type="active site" description="Proton acceptor" evidence="2">
    <location>
        <position position="91"/>
    </location>
</feature>
<feature type="active site" description="S-methylcysteine intermediate" evidence="1">
    <location>
        <position position="325"/>
    </location>
</feature>
<feature type="binding site" evidence="1">
    <location>
        <position position="108"/>
    </location>
    <ligand>
        <name>[4Fe-4S] cluster</name>
        <dbReference type="ChEBI" id="CHEBI:49883"/>
        <note>4Fe-4S-S-AdoMet</note>
    </ligand>
</feature>
<feature type="binding site" evidence="1">
    <location>
        <position position="112"/>
    </location>
    <ligand>
        <name>[4Fe-4S] cluster</name>
        <dbReference type="ChEBI" id="CHEBI:49883"/>
        <note>4Fe-4S-S-AdoMet</note>
    </ligand>
</feature>
<feature type="binding site" evidence="1">
    <location>
        <position position="115"/>
    </location>
    <ligand>
        <name>[4Fe-4S] cluster</name>
        <dbReference type="ChEBI" id="CHEBI:49883"/>
        <note>4Fe-4S-S-AdoMet</note>
    </ligand>
</feature>
<feature type="binding site" evidence="1">
    <location>
        <begin position="153"/>
        <end position="154"/>
    </location>
    <ligand>
        <name>S-adenosyl-L-methionine</name>
        <dbReference type="ChEBI" id="CHEBI:59789"/>
    </ligand>
</feature>
<feature type="binding site" evidence="1">
    <location>
        <position position="183"/>
    </location>
    <ligand>
        <name>S-adenosyl-L-methionine</name>
        <dbReference type="ChEBI" id="CHEBI:59789"/>
    </ligand>
</feature>
<feature type="binding site" evidence="1">
    <location>
        <begin position="206"/>
        <end position="208"/>
    </location>
    <ligand>
        <name>S-adenosyl-L-methionine</name>
        <dbReference type="ChEBI" id="CHEBI:59789"/>
    </ligand>
</feature>
<feature type="binding site" evidence="1">
    <location>
        <position position="282"/>
    </location>
    <ligand>
        <name>S-adenosyl-L-methionine</name>
        <dbReference type="ChEBI" id="CHEBI:59789"/>
    </ligand>
</feature>
<feature type="disulfide bond" description="(transient)" evidence="1">
    <location>
        <begin position="101"/>
        <end position="325"/>
    </location>
</feature>
<name>Y1157_DECAR</name>
<sequence length="357" mass="39194">MRLETIRQSMRATGAKDCHIDRVLRAWTQAKPLESGARRHQPENFLPQALRTALPALQEELSALARVRSEHPGEDGSSRLLVELADGQTVESVLLPRDGLCISTQIGCAVGCTFCMTGRDGLLRQVSSAEMVAQVVLGRGRRKVTRVVFMGMGEPSHNMDNVLEAIDTLGTYGGIGHKNLVFSTVGDRRVFDRLPQQRVVPALALSLHSTRAELRAELLPKAPHIDPTELVELAEHYARTTGYPIQYQWTLIDGINDSIEEMDGIVRLLTGKYAIMNLIPYNATATLDYRRPSLEHITTLTKYLHAKGIRTTVRNSAGQDVDGGCGQLRARTLDAGTATDAQKISLKHLKTGTRSAA</sequence>